<keyword id="KW-0072">Autophagy</keyword>
<keyword id="KW-1017">Isopeptide bond</keyword>
<keyword id="KW-0472">Membrane</keyword>
<keyword id="KW-0653">Protein transport</keyword>
<keyword id="KW-1185">Reference proteome</keyword>
<keyword id="KW-0813">Transport</keyword>
<keyword id="KW-0833">Ubl conjugation pathway</keyword>
<gene>
    <name type="primary">ATG12</name>
    <name type="ordered locus">KLLA0C05720g</name>
</gene>
<dbReference type="EMBL" id="CR382123">
    <property type="protein sequence ID" value="CAH01305.1"/>
    <property type="molecule type" value="Genomic_DNA"/>
</dbReference>
<dbReference type="RefSeq" id="XP_452454.1">
    <property type="nucleotide sequence ID" value="XM_452454.1"/>
</dbReference>
<dbReference type="SMR" id="Q6CUD5"/>
<dbReference type="FunCoup" id="Q6CUD5">
    <property type="interactions" value="185"/>
</dbReference>
<dbReference type="STRING" id="284590.Q6CUD5"/>
<dbReference type="PaxDb" id="284590-Q6CUD5"/>
<dbReference type="KEGG" id="kla:KLLA0_C05720g"/>
<dbReference type="eggNOG" id="KOG3439">
    <property type="taxonomic scope" value="Eukaryota"/>
</dbReference>
<dbReference type="HOGENOM" id="CLU_106795_0_0_1"/>
<dbReference type="InParanoid" id="Q6CUD5"/>
<dbReference type="OMA" id="NIGELWM"/>
<dbReference type="Proteomes" id="UP000000598">
    <property type="component" value="Chromosome C"/>
</dbReference>
<dbReference type="GO" id="GO:0034274">
    <property type="term" value="C:Atg12-Atg5-Atg16 complex"/>
    <property type="evidence" value="ECO:0007669"/>
    <property type="project" value="TreeGrafter"/>
</dbReference>
<dbReference type="GO" id="GO:0000421">
    <property type="term" value="C:autophagosome membrane"/>
    <property type="evidence" value="ECO:0007669"/>
    <property type="project" value="TreeGrafter"/>
</dbReference>
<dbReference type="GO" id="GO:0034045">
    <property type="term" value="C:phagophore assembly site membrane"/>
    <property type="evidence" value="ECO:0007669"/>
    <property type="project" value="UniProtKB-SubCell"/>
</dbReference>
<dbReference type="GO" id="GO:0019776">
    <property type="term" value="F:Atg8-family ligase activity"/>
    <property type="evidence" value="ECO:0007669"/>
    <property type="project" value="TreeGrafter"/>
</dbReference>
<dbReference type="GO" id="GO:0000045">
    <property type="term" value="P:autophagosome assembly"/>
    <property type="evidence" value="ECO:0007669"/>
    <property type="project" value="InterPro"/>
</dbReference>
<dbReference type="GO" id="GO:0097352">
    <property type="term" value="P:autophagosome maturation"/>
    <property type="evidence" value="ECO:0007669"/>
    <property type="project" value="TreeGrafter"/>
</dbReference>
<dbReference type="GO" id="GO:0000422">
    <property type="term" value="P:autophagy of mitochondrion"/>
    <property type="evidence" value="ECO:0007669"/>
    <property type="project" value="TreeGrafter"/>
</dbReference>
<dbReference type="GO" id="GO:0061723">
    <property type="term" value="P:glycophagy"/>
    <property type="evidence" value="ECO:0007669"/>
    <property type="project" value="TreeGrafter"/>
</dbReference>
<dbReference type="GO" id="GO:0034727">
    <property type="term" value="P:piecemeal microautophagy of the nucleus"/>
    <property type="evidence" value="ECO:0007669"/>
    <property type="project" value="TreeGrafter"/>
</dbReference>
<dbReference type="GO" id="GO:0015031">
    <property type="term" value="P:protein transport"/>
    <property type="evidence" value="ECO:0007669"/>
    <property type="project" value="UniProtKB-KW"/>
</dbReference>
<dbReference type="CDD" id="cd01612">
    <property type="entry name" value="Ubl_ATG12"/>
    <property type="match status" value="1"/>
</dbReference>
<dbReference type="Gene3D" id="3.10.20.90">
    <property type="entry name" value="Phosphatidylinositol 3-kinase Catalytic Subunit, Chain A, domain 1"/>
    <property type="match status" value="1"/>
</dbReference>
<dbReference type="InterPro" id="IPR007242">
    <property type="entry name" value="Atg12"/>
</dbReference>
<dbReference type="InterPro" id="IPR029071">
    <property type="entry name" value="Ubiquitin-like_domsf"/>
</dbReference>
<dbReference type="PANTHER" id="PTHR13385">
    <property type="entry name" value="AUTOPHAGY PROTEIN 12"/>
    <property type="match status" value="1"/>
</dbReference>
<dbReference type="PANTHER" id="PTHR13385:SF0">
    <property type="entry name" value="UBIQUITIN-LIKE PROTEIN ATG12"/>
    <property type="match status" value="1"/>
</dbReference>
<dbReference type="Pfam" id="PF04110">
    <property type="entry name" value="APG12"/>
    <property type="match status" value="1"/>
</dbReference>
<dbReference type="SUPFAM" id="SSF54236">
    <property type="entry name" value="Ubiquitin-like"/>
    <property type="match status" value="1"/>
</dbReference>
<accession>Q6CUD5</accession>
<organism>
    <name type="scientific">Kluyveromyces lactis (strain ATCC 8585 / CBS 2359 / DSM 70799 / NBRC 1267 / NRRL Y-1140 / WM37)</name>
    <name type="common">Yeast</name>
    <name type="synonym">Candida sphaerica</name>
    <dbReference type="NCBI Taxonomy" id="284590"/>
    <lineage>
        <taxon>Eukaryota</taxon>
        <taxon>Fungi</taxon>
        <taxon>Dikarya</taxon>
        <taxon>Ascomycota</taxon>
        <taxon>Saccharomycotina</taxon>
        <taxon>Saccharomycetes</taxon>
        <taxon>Saccharomycetales</taxon>
        <taxon>Saccharomycetaceae</taxon>
        <taxon>Kluyveromyces</taxon>
    </lineage>
</organism>
<proteinExistence type="inferred from homology"/>
<comment type="function">
    <text evidence="1">Ubiquitin-like protein involved in cytoplasm to vacuole transport (Cvt), autophagy vesicles formation, mitophagy, and nucleophagy. Conjugation with ATG5 through a ubiquitin-like conjugating system involving also ATG7 as an E1-like activating enzyme and ATG10 as an E2-like conjugating enzyme, is essential for its function. The ATG12-ATG5 conjugate functions as an E3-like enzyme which is required for lipidation of ATG8 and ATG8 association to the vesicle membranes (By similarity).</text>
</comment>
<comment type="subunit">
    <text evidence="1">Forms a conjugate with ATG5.</text>
</comment>
<comment type="subcellular location">
    <subcellularLocation>
        <location evidence="1">Preautophagosomal structure membrane</location>
        <topology evidence="1">Peripheral membrane protein</topology>
    </subcellularLocation>
</comment>
<comment type="similarity">
    <text evidence="3">Belongs to the ATG12 family.</text>
</comment>
<sequence>MNSGVLLSESETDTSEVSGRQSELISGDESIKGKLEEFSAKLNELRLADGNSDGGDEEESLSPDTKSQREESSENSENVSRSTSRPPLTSSIVSSVEREQLKSQVKVKIRLQPIGAIPQIQPRVCQISAHQQFLALTRFLCKRLKRKHIHCYINNAFAPSLDQNIGDLWTQFKVNDELIVSYCETVAFG</sequence>
<feature type="chain" id="PRO_0000212480" description="Ubiquitin-like protein ATG12">
    <location>
        <begin position="1"/>
        <end position="189"/>
    </location>
</feature>
<feature type="region of interest" description="Disordered" evidence="2">
    <location>
        <begin position="1"/>
        <end position="30"/>
    </location>
</feature>
<feature type="region of interest" description="Disordered" evidence="2">
    <location>
        <begin position="45"/>
        <end position="92"/>
    </location>
</feature>
<feature type="compositionally biased region" description="Polar residues" evidence="2">
    <location>
        <begin position="15"/>
        <end position="24"/>
    </location>
</feature>
<feature type="compositionally biased region" description="Low complexity" evidence="2">
    <location>
        <begin position="75"/>
        <end position="91"/>
    </location>
</feature>
<feature type="cross-link" description="Glycyl lysine isopeptide (Gly-Lys) (interchain with K-145 in ATG5)" evidence="1">
    <location>
        <position position="189"/>
    </location>
</feature>
<evidence type="ECO:0000250" key="1"/>
<evidence type="ECO:0000256" key="2">
    <source>
        <dbReference type="SAM" id="MobiDB-lite"/>
    </source>
</evidence>
<evidence type="ECO:0000305" key="3"/>
<reference key="1">
    <citation type="journal article" date="2004" name="Nature">
        <title>Genome evolution in yeasts.</title>
        <authorList>
            <person name="Dujon B."/>
            <person name="Sherman D."/>
            <person name="Fischer G."/>
            <person name="Durrens P."/>
            <person name="Casaregola S."/>
            <person name="Lafontaine I."/>
            <person name="de Montigny J."/>
            <person name="Marck C."/>
            <person name="Neuveglise C."/>
            <person name="Talla E."/>
            <person name="Goffard N."/>
            <person name="Frangeul L."/>
            <person name="Aigle M."/>
            <person name="Anthouard V."/>
            <person name="Babour A."/>
            <person name="Barbe V."/>
            <person name="Barnay S."/>
            <person name="Blanchin S."/>
            <person name="Beckerich J.-M."/>
            <person name="Beyne E."/>
            <person name="Bleykasten C."/>
            <person name="Boisrame A."/>
            <person name="Boyer J."/>
            <person name="Cattolico L."/>
            <person name="Confanioleri F."/>
            <person name="de Daruvar A."/>
            <person name="Despons L."/>
            <person name="Fabre E."/>
            <person name="Fairhead C."/>
            <person name="Ferry-Dumazet H."/>
            <person name="Groppi A."/>
            <person name="Hantraye F."/>
            <person name="Hennequin C."/>
            <person name="Jauniaux N."/>
            <person name="Joyet P."/>
            <person name="Kachouri R."/>
            <person name="Kerrest A."/>
            <person name="Koszul R."/>
            <person name="Lemaire M."/>
            <person name="Lesur I."/>
            <person name="Ma L."/>
            <person name="Muller H."/>
            <person name="Nicaud J.-M."/>
            <person name="Nikolski M."/>
            <person name="Oztas S."/>
            <person name="Ozier-Kalogeropoulos O."/>
            <person name="Pellenz S."/>
            <person name="Potier S."/>
            <person name="Richard G.-F."/>
            <person name="Straub M.-L."/>
            <person name="Suleau A."/>
            <person name="Swennen D."/>
            <person name="Tekaia F."/>
            <person name="Wesolowski-Louvel M."/>
            <person name="Westhof E."/>
            <person name="Wirth B."/>
            <person name="Zeniou-Meyer M."/>
            <person name="Zivanovic Y."/>
            <person name="Bolotin-Fukuhara M."/>
            <person name="Thierry A."/>
            <person name="Bouchier C."/>
            <person name="Caudron B."/>
            <person name="Scarpelli C."/>
            <person name="Gaillardin C."/>
            <person name="Weissenbach J."/>
            <person name="Wincker P."/>
            <person name="Souciet J.-L."/>
        </authorList>
    </citation>
    <scope>NUCLEOTIDE SEQUENCE [LARGE SCALE GENOMIC DNA]</scope>
    <source>
        <strain>ATCC 8585 / CBS 2359 / DSM 70799 / NBRC 1267 / NRRL Y-1140 / WM37</strain>
    </source>
</reference>
<name>ATG12_KLULA</name>
<protein>
    <recommendedName>
        <fullName>Ubiquitin-like protein ATG12</fullName>
    </recommendedName>
    <alternativeName>
        <fullName>Autophagy-related protein 12</fullName>
    </alternativeName>
</protein>